<evidence type="ECO:0000250" key="1"/>
<evidence type="ECO:0000305" key="2"/>
<gene>
    <name type="primary">ydiV</name>
    <name type="ordered locus">STY1766</name>
    <name type="ordered locus">t1225</name>
</gene>
<sequence>MIASLDELYHSELFFLPVMDENARLVGLEIIATFAAEDGAVRMPTELVAPRLSVEEQYCLFVEKLALLETCQHFFIQHKLIAWLNLPPAISDLLLLDSELFSRAARFPFFEVAINENYPGLNQGKNNETLANLAMHFPLILANFGAGEASTKAIFDGLFKRVMLDKNFIQQRAEMISFEPFMHAIVAQISSSCESLMIAGIDTEAMFARAAPLGFSAFQGGLWPPVPVSQLIKLVQR</sequence>
<dbReference type="EMBL" id="AE014613">
    <property type="protein sequence ID" value="AAO68880.1"/>
    <property type="molecule type" value="Genomic_DNA"/>
</dbReference>
<dbReference type="EMBL" id="AL513382">
    <property type="protein sequence ID" value="CAD02008.1"/>
    <property type="molecule type" value="Genomic_DNA"/>
</dbReference>
<dbReference type="RefSeq" id="NP_456167.1">
    <property type="nucleotide sequence ID" value="NC_003198.1"/>
</dbReference>
<dbReference type="RefSeq" id="WP_000561998.1">
    <property type="nucleotide sequence ID" value="NZ_WSUR01000011.1"/>
</dbReference>
<dbReference type="SMR" id="Q8Z6I7"/>
<dbReference type="STRING" id="220341.gene:17585700"/>
<dbReference type="KEGG" id="stt:t1225"/>
<dbReference type="KEGG" id="sty:STY1766"/>
<dbReference type="PATRIC" id="fig|220341.7.peg.1778"/>
<dbReference type="eggNOG" id="COG2200">
    <property type="taxonomic scope" value="Bacteria"/>
</dbReference>
<dbReference type="HOGENOM" id="CLU_089254_1_1_6"/>
<dbReference type="OMA" id="LSFEPFM"/>
<dbReference type="OrthoDB" id="8552213at2"/>
<dbReference type="Proteomes" id="UP000000541">
    <property type="component" value="Chromosome"/>
</dbReference>
<dbReference type="Proteomes" id="UP000002670">
    <property type="component" value="Chromosome"/>
</dbReference>
<dbReference type="Gene3D" id="3.20.20.450">
    <property type="entry name" value="EAL domain"/>
    <property type="match status" value="1"/>
</dbReference>
<dbReference type="InterPro" id="IPR001633">
    <property type="entry name" value="EAL_dom"/>
</dbReference>
<dbReference type="InterPro" id="IPR035919">
    <property type="entry name" value="EAL_sf"/>
</dbReference>
<dbReference type="Pfam" id="PF00563">
    <property type="entry name" value="EAL"/>
    <property type="match status" value="1"/>
</dbReference>
<dbReference type="SUPFAM" id="SSF141868">
    <property type="entry name" value="EAL domain-like"/>
    <property type="match status" value="1"/>
</dbReference>
<comment type="function">
    <text evidence="1">Acts as an anti-FlhC(2)FlhD(4) factor by binding to FlhD, decreasing its ability to bind DNA, and thus negatively regulates expression of flagellar class II operons, decreasing motility in nutrient-poor medium. Required for resistance to host phagocyte oxidase (By similarity).</text>
</comment>
<comment type="subunit">
    <text evidence="1">Interacts with FlhD in the FlhC(2)FlhD(4) heterohexamer, inhibiting its ability to activate transcription.</text>
</comment>
<comment type="similarity">
    <text evidence="2">Belongs to the YdiV family.</text>
</comment>
<organism>
    <name type="scientific">Salmonella typhi</name>
    <dbReference type="NCBI Taxonomy" id="90370"/>
    <lineage>
        <taxon>Bacteria</taxon>
        <taxon>Pseudomonadati</taxon>
        <taxon>Pseudomonadota</taxon>
        <taxon>Gammaproteobacteria</taxon>
        <taxon>Enterobacterales</taxon>
        <taxon>Enterobacteriaceae</taxon>
        <taxon>Salmonella</taxon>
    </lineage>
</organism>
<name>YDIV_SALTI</name>
<keyword id="KW-0678">Repressor</keyword>
<keyword id="KW-0804">Transcription</keyword>
<keyword id="KW-0805">Transcription regulation</keyword>
<keyword id="KW-0843">Virulence</keyword>
<protein>
    <recommendedName>
        <fullName>Anti-FlhC(2)FlhD(4) factor YdiV</fullName>
    </recommendedName>
</protein>
<reference key="1">
    <citation type="journal article" date="2001" name="Nature">
        <title>Complete genome sequence of a multiple drug resistant Salmonella enterica serovar Typhi CT18.</title>
        <authorList>
            <person name="Parkhill J."/>
            <person name="Dougan G."/>
            <person name="James K.D."/>
            <person name="Thomson N.R."/>
            <person name="Pickard D."/>
            <person name="Wain J."/>
            <person name="Churcher C.M."/>
            <person name="Mungall K.L."/>
            <person name="Bentley S.D."/>
            <person name="Holden M.T.G."/>
            <person name="Sebaihia M."/>
            <person name="Baker S."/>
            <person name="Basham D."/>
            <person name="Brooks K."/>
            <person name="Chillingworth T."/>
            <person name="Connerton P."/>
            <person name="Cronin A."/>
            <person name="Davis P."/>
            <person name="Davies R.M."/>
            <person name="Dowd L."/>
            <person name="White N."/>
            <person name="Farrar J."/>
            <person name="Feltwell T."/>
            <person name="Hamlin N."/>
            <person name="Haque A."/>
            <person name="Hien T.T."/>
            <person name="Holroyd S."/>
            <person name="Jagels K."/>
            <person name="Krogh A."/>
            <person name="Larsen T.S."/>
            <person name="Leather S."/>
            <person name="Moule S."/>
            <person name="O'Gaora P."/>
            <person name="Parry C."/>
            <person name="Quail M.A."/>
            <person name="Rutherford K.M."/>
            <person name="Simmonds M."/>
            <person name="Skelton J."/>
            <person name="Stevens K."/>
            <person name="Whitehead S."/>
            <person name="Barrell B.G."/>
        </authorList>
    </citation>
    <scope>NUCLEOTIDE SEQUENCE [LARGE SCALE GENOMIC DNA]</scope>
    <source>
        <strain>CT18</strain>
    </source>
</reference>
<reference key="2">
    <citation type="journal article" date="2003" name="J. Bacteriol.">
        <title>Comparative genomics of Salmonella enterica serovar Typhi strains Ty2 and CT18.</title>
        <authorList>
            <person name="Deng W."/>
            <person name="Liou S.-R."/>
            <person name="Plunkett G. III"/>
            <person name="Mayhew G.F."/>
            <person name="Rose D.J."/>
            <person name="Burland V."/>
            <person name="Kodoyianni V."/>
            <person name="Schwartz D.C."/>
            <person name="Blattner F.R."/>
        </authorList>
    </citation>
    <scope>NUCLEOTIDE SEQUENCE [LARGE SCALE GENOMIC DNA]</scope>
    <source>
        <strain>ATCC 700931 / Ty2</strain>
    </source>
</reference>
<feature type="chain" id="PRO_0000346869" description="Anti-FlhC(2)FlhD(4) factor YdiV">
    <location>
        <begin position="1"/>
        <end position="237"/>
    </location>
</feature>
<feature type="domain" description="EAL">
    <location>
        <begin position="1"/>
        <end position="237"/>
    </location>
</feature>
<accession>Q8Z6I7</accession>
<accession>Q7CA76</accession>
<proteinExistence type="inferred from homology"/>